<comment type="function">
    <text evidence="8">Might have a role in sequestration of chitin oligosaccharides (breakdown products of fungal cell walls that are released during invasion and act as triggers of host immunity) to dampen host defense.</text>
</comment>
<comment type="induction">
    <text evidence="5">Expressed constitutively with no significant difference during colonization of banana roots.</text>
</comment>
<comment type="domain">
    <text evidence="8">The LysM (lysin motif) domains are small globular domains involved in binding chitin in eukaryotes. Lys3 contains 5 LysM domains.</text>
</comment>
<comment type="miscellaneous">
    <text evidence="7">In plants, chitin acts as a microbe-associated molecular pattern (MAMP) that is recognized by lysin motif (LysM)-containing plant cell surface-localized pattern recognition receptors (PRRs) that activate a plethora of downstream immune responses.</text>
</comment>
<comment type="similarity">
    <text evidence="7">Belongs to the secreted LysM effector family.</text>
</comment>
<evidence type="ECO:0000255" key="1"/>
<evidence type="ECO:0000255" key="2">
    <source>
        <dbReference type="PROSITE-ProRule" id="PRU00498"/>
    </source>
</evidence>
<evidence type="ECO:0000255" key="3">
    <source>
        <dbReference type="PROSITE-ProRule" id="PRU01118"/>
    </source>
</evidence>
<evidence type="ECO:0000256" key="4">
    <source>
        <dbReference type="SAM" id="MobiDB-lite"/>
    </source>
</evidence>
<evidence type="ECO:0000269" key="5">
    <source>
    </source>
</evidence>
<evidence type="ECO:0000303" key="6">
    <source>
    </source>
</evidence>
<evidence type="ECO:0000305" key="7"/>
<evidence type="ECO:0000305" key="8">
    <source>
    </source>
</evidence>
<accession>A0A4Q7K9F4</accession>
<sequence>MLWLTVSLTGFALLGVVAAQQIEGFYYPYHLLGLSDGCVETLNTTISSCSQVLGQQANLDSGAVRVLVAPDLNELCTTACVDDLKSLKTKIQSTCSKDDVMVKNDIAYPGSWKAQLESPFGYDDSLASDFSSQTSSCHATGFTFTTPTAYALNTTATPAPTPICQRTYTVLATDTCASIAQANKVATFGVVSLNNLGTGCEALVEGKTLCLPETCTLRKITRDDDCGQVVKDANTTIPRLIAWNPMLNPECSNFLDYIGYYICISCLLRTPGGSAKPIEGETAITAVPVPTNANAESQKNCAKWYVVQPGDGCADISVANGITLVDFYFLNSGVNRDCTNLWLGYAYCVKPVGNIQTYPGYPVTVPSTSFTRPPALTETSTETLVLPTPTYAPGTYDNCSDYSRGMPASWSDAAKLNSCSFIAHINGVTVSQLLQWNPSLSKDSCSLSRELYYCVRMGQPVSEPIDYDGTLCMNIQDDKDIVPGTISNCNCFSYVSGGLGKLYTTCEDIVSEFDYDVGHLVELNPWLTKANCTKELFADLSGPYDYRYFCISNTGDPLHQSPAKSQTRTIHTTSTVQRAVISTPSSVSMTNSAPATATSTGGPPAPTQDGAVSNCTKWHVVESGDGCWAIYTKYGITSDQLFEWNTKISKDCSNIWLGYAVCVGV</sequence>
<gene>
    <name evidence="6" type="primary">Lys3</name>
    <name type="ORF">I1G_00007068</name>
</gene>
<dbReference type="EMBL" id="AOSW02000100">
    <property type="protein sequence ID" value="RZR69809.1"/>
    <property type="molecule type" value="Genomic_DNA"/>
</dbReference>
<dbReference type="STRING" id="1052797.A0A4Q7K9F4"/>
<dbReference type="GO" id="GO:0008061">
    <property type="term" value="F:chitin binding"/>
    <property type="evidence" value="ECO:0007669"/>
    <property type="project" value="UniProtKB-KW"/>
</dbReference>
<dbReference type="CDD" id="cd00118">
    <property type="entry name" value="LysM"/>
    <property type="match status" value="2"/>
</dbReference>
<dbReference type="Gene3D" id="3.10.350.10">
    <property type="entry name" value="LysM domain"/>
    <property type="match status" value="5"/>
</dbReference>
<dbReference type="InterPro" id="IPR052210">
    <property type="entry name" value="LysM1-like"/>
</dbReference>
<dbReference type="InterPro" id="IPR018392">
    <property type="entry name" value="LysM_dom"/>
</dbReference>
<dbReference type="InterPro" id="IPR036779">
    <property type="entry name" value="LysM_dom_sf"/>
</dbReference>
<dbReference type="PANTHER" id="PTHR34997">
    <property type="entry name" value="AM15"/>
    <property type="match status" value="1"/>
</dbReference>
<dbReference type="PANTHER" id="PTHR34997:SF1">
    <property type="entry name" value="PEPTIDOGLYCAN-BINDING LYSIN DOMAIN"/>
    <property type="match status" value="1"/>
</dbReference>
<dbReference type="Pfam" id="PF01476">
    <property type="entry name" value="LysM"/>
    <property type="match status" value="4"/>
</dbReference>
<dbReference type="SMART" id="SM00257">
    <property type="entry name" value="LysM"/>
    <property type="match status" value="3"/>
</dbReference>
<dbReference type="SUPFAM" id="SSF54106">
    <property type="entry name" value="LysM domain"/>
    <property type="match status" value="3"/>
</dbReference>
<dbReference type="PROSITE" id="PS51782">
    <property type="entry name" value="LYSM"/>
    <property type="match status" value="3"/>
</dbReference>
<reference key="1">
    <citation type="journal article" date="2014" name="Fungal Genet. Biol.">
        <title>Sequencing and functional analysis of the genome of a nematode egg-parasitic fungus, Pochonia chlamydosporia.</title>
        <authorList>
            <person name="Larriba E."/>
            <person name="Jaime M.D."/>
            <person name="Carbonell-Caballero J."/>
            <person name="Conesa A."/>
            <person name="Dopazo J."/>
            <person name="Nislow C."/>
            <person name="Martin-Nieto J."/>
            <person name="Lopez-Llorca L.V."/>
        </authorList>
    </citation>
    <scope>NUCLEOTIDE SEQUENCE [LARGE SCALE GENOMIC DNA]</scope>
    <source>
        <strain>123</strain>
    </source>
</reference>
<reference key="2">
    <citation type="journal article" date="2021" name="Int. J. Mol. Sci.">
        <title>Putative LysM effectors contribute to fungal lifestyle.</title>
        <authorList>
            <person name="Suarez-Fernandez M."/>
            <person name="Aragon-Perez A."/>
            <person name="Lopez-Llorca L.V."/>
            <person name="Lopez-Moya F."/>
        </authorList>
    </citation>
    <scope>DOMAIN</scope>
    <scope>INDUCTION</scope>
</reference>
<organism>
    <name type="scientific">Pochonia chlamydosporia (strain 123)</name>
    <name type="common">Metacordyceps chlamydosporia</name>
    <dbReference type="NCBI Taxonomy" id="1052797"/>
    <lineage>
        <taxon>Eukaryota</taxon>
        <taxon>Fungi</taxon>
        <taxon>Dikarya</taxon>
        <taxon>Ascomycota</taxon>
        <taxon>Pezizomycotina</taxon>
        <taxon>Sordariomycetes</taxon>
        <taxon>Hypocreomycetidae</taxon>
        <taxon>Hypocreales</taxon>
        <taxon>Clavicipitaceae</taxon>
        <taxon>Pochonia</taxon>
    </lineage>
</organism>
<protein>
    <recommendedName>
        <fullName evidence="6">Secreted LysM effector Lys3</fullName>
    </recommendedName>
    <alternativeName>
        <fullName evidence="6">LysM domain-containing protein 3</fullName>
    </alternativeName>
</protein>
<name>LYSM3_POCC1</name>
<keyword id="KW-0147">Chitin-binding</keyword>
<keyword id="KW-0325">Glycoprotein</keyword>
<keyword id="KW-0677">Repeat</keyword>
<keyword id="KW-0732">Signal</keyword>
<keyword id="KW-0843">Virulence</keyword>
<feature type="signal peptide" evidence="1">
    <location>
        <begin position="1"/>
        <end position="19"/>
    </location>
</feature>
<feature type="chain" id="PRO_5020857219" description="Secreted LysM effector Lys3">
    <location>
        <begin position="20"/>
        <end position="665"/>
    </location>
</feature>
<feature type="domain" description="LysM 1" evidence="3">
    <location>
        <begin position="166"/>
        <end position="211"/>
    </location>
</feature>
<feature type="domain" description="LysM 2" evidence="3">
    <location>
        <begin position="216"/>
        <end position="264"/>
    </location>
</feature>
<feature type="domain" description="LysM 3" evidence="3">
    <location>
        <begin position="303"/>
        <end position="349"/>
    </location>
</feature>
<feature type="domain" description="LysM 4" evidence="3">
    <location>
        <begin position="409"/>
        <end position="454"/>
    </location>
</feature>
<feature type="domain" description="LysM 5" evidence="3">
    <location>
        <begin position="617"/>
        <end position="663"/>
    </location>
</feature>
<feature type="region of interest" description="Disordered" evidence="4">
    <location>
        <begin position="585"/>
        <end position="610"/>
    </location>
</feature>
<feature type="compositionally biased region" description="Low complexity" evidence="4">
    <location>
        <begin position="592"/>
        <end position="602"/>
    </location>
</feature>
<feature type="glycosylation site" description="N-linked (GlcNAc...) asparagine" evidence="2">
    <location>
        <position position="43"/>
    </location>
</feature>
<feature type="glycosylation site" description="N-linked (GlcNAc...) asparagine" evidence="2">
    <location>
        <position position="153"/>
    </location>
</feature>
<feature type="glycosylation site" description="N-linked (GlcNAc...) asparagine" evidence="2">
    <location>
        <position position="234"/>
    </location>
</feature>
<feature type="glycosylation site" description="N-linked (GlcNAc...) asparagine" evidence="2">
    <location>
        <position position="398"/>
    </location>
</feature>
<feature type="glycosylation site" description="N-linked (GlcNAc...) asparagine" evidence="2">
    <location>
        <position position="531"/>
    </location>
</feature>
<feature type="glycosylation site" description="N-linked (GlcNAc...) asparagine" evidence="2">
    <location>
        <position position="614"/>
    </location>
</feature>
<proteinExistence type="evidence at transcript level"/>